<reference key="1">
    <citation type="journal article" date="2007" name="Environ. Microbiol.">
        <title>Whole-genome analysis of the ammonia-oxidizing bacterium, Nitrosomonas eutropha C91: implications for niche adaptation.</title>
        <authorList>
            <person name="Stein L.Y."/>
            <person name="Arp D.J."/>
            <person name="Berube P.M."/>
            <person name="Chain P.S."/>
            <person name="Hauser L."/>
            <person name="Jetten M.S."/>
            <person name="Klotz M.G."/>
            <person name="Larimer F.W."/>
            <person name="Norton J.M."/>
            <person name="Op den Camp H.J.M."/>
            <person name="Shin M."/>
            <person name="Wei X."/>
        </authorList>
    </citation>
    <scope>NUCLEOTIDE SEQUENCE [LARGE SCALE GENOMIC DNA]</scope>
    <source>
        <strain>DSM 101675 / C91 / Nm57</strain>
    </source>
</reference>
<protein>
    <recommendedName>
        <fullName evidence="1">Phosphatidylserine decarboxylase proenzyme</fullName>
        <ecNumber evidence="1">4.1.1.65</ecNumber>
    </recommendedName>
    <component>
        <recommendedName>
            <fullName evidence="1">Phosphatidylserine decarboxylase alpha chain</fullName>
        </recommendedName>
    </component>
    <component>
        <recommendedName>
            <fullName evidence="1">Phosphatidylserine decarboxylase beta chain</fullName>
        </recommendedName>
    </component>
</protein>
<keyword id="KW-1003">Cell membrane</keyword>
<keyword id="KW-0210">Decarboxylase</keyword>
<keyword id="KW-0444">Lipid biosynthesis</keyword>
<keyword id="KW-0443">Lipid metabolism</keyword>
<keyword id="KW-0456">Lyase</keyword>
<keyword id="KW-0472">Membrane</keyword>
<keyword id="KW-0594">Phospholipid biosynthesis</keyword>
<keyword id="KW-1208">Phospholipid metabolism</keyword>
<keyword id="KW-0670">Pyruvate</keyword>
<keyword id="KW-0865">Zymogen</keyword>
<feature type="chain" id="PRO_1000026668" description="Phosphatidylserine decarboxylase beta chain" evidence="1">
    <location>
        <begin position="1"/>
        <end position="184"/>
    </location>
</feature>
<feature type="chain" id="PRO_1000026669" description="Phosphatidylserine decarboxylase alpha chain" evidence="1">
    <location>
        <begin position="185"/>
        <end position="216"/>
    </location>
</feature>
<feature type="active site" description="Schiff-base intermediate with substrate; via pyruvic acid" evidence="1">
    <location>
        <position position="185"/>
    </location>
</feature>
<feature type="site" description="Cleavage (non-hydrolytic); by autocatalysis" evidence="1">
    <location>
        <begin position="184"/>
        <end position="185"/>
    </location>
</feature>
<feature type="modified residue" description="Pyruvic acid (Ser); by autocatalysis" evidence="1">
    <location>
        <position position="185"/>
    </location>
</feature>
<gene>
    <name evidence="1" type="primary">psd</name>
    <name type="ordered locus">Neut_1259</name>
</gene>
<accession>Q0AGM1</accession>
<comment type="function">
    <text evidence="1">Catalyzes the formation of phosphatidylethanolamine (PtdEtn) from phosphatidylserine (PtdSer).</text>
</comment>
<comment type="catalytic activity">
    <reaction evidence="1">
        <text>a 1,2-diacyl-sn-glycero-3-phospho-L-serine + H(+) = a 1,2-diacyl-sn-glycero-3-phosphoethanolamine + CO2</text>
        <dbReference type="Rhea" id="RHEA:20828"/>
        <dbReference type="ChEBI" id="CHEBI:15378"/>
        <dbReference type="ChEBI" id="CHEBI:16526"/>
        <dbReference type="ChEBI" id="CHEBI:57262"/>
        <dbReference type="ChEBI" id="CHEBI:64612"/>
        <dbReference type="EC" id="4.1.1.65"/>
    </reaction>
</comment>
<comment type="cofactor">
    <cofactor evidence="1">
        <name>pyruvate</name>
        <dbReference type="ChEBI" id="CHEBI:15361"/>
    </cofactor>
    <text evidence="1">Binds 1 pyruvoyl group covalently per subunit.</text>
</comment>
<comment type="pathway">
    <text evidence="1">Phospholipid metabolism; phosphatidylethanolamine biosynthesis; phosphatidylethanolamine from CDP-diacylglycerol: step 2/2.</text>
</comment>
<comment type="subunit">
    <text evidence="1">Heterodimer of a large membrane-associated beta subunit and a small pyruvoyl-containing alpha subunit.</text>
</comment>
<comment type="subcellular location">
    <subcellularLocation>
        <location evidence="1">Cell membrane</location>
        <topology evidence="1">Peripheral membrane protein</topology>
    </subcellularLocation>
</comment>
<comment type="PTM">
    <text evidence="1">Is synthesized initially as an inactive proenzyme. Formation of the active enzyme involves a self-maturation process in which the active site pyruvoyl group is generated from an internal serine residue via an autocatalytic post-translational modification. Two non-identical subunits are generated from the proenzyme in this reaction, and the pyruvate is formed at the N-terminus of the alpha chain, which is derived from the carboxyl end of the proenzyme. The post-translation cleavage follows an unusual pathway, termed non-hydrolytic serinolysis, in which the side chain hydroxyl group of the serine supplies its oxygen atom to form the C-terminus of the beta chain, while the remainder of the serine residue undergoes an oxidative deamination to produce ammonia and the pyruvoyl prosthetic group on the alpha chain.</text>
</comment>
<comment type="similarity">
    <text evidence="1">Belongs to the phosphatidylserine decarboxylase family. PSD-A subfamily.</text>
</comment>
<proteinExistence type="inferred from homology"/>
<organism>
    <name type="scientific">Nitrosomonas eutropha (strain DSM 101675 / C91 / Nm57)</name>
    <dbReference type="NCBI Taxonomy" id="335283"/>
    <lineage>
        <taxon>Bacteria</taxon>
        <taxon>Pseudomonadati</taxon>
        <taxon>Pseudomonadota</taxon>
        <taxon>Betaproteobacteria</taxon>
        <taxon>Nitrosomonadales</taxon>
        <taxon>Nitrosomonadaceae</taxon>
        <taxon>Nitrosomonas</taxon>
    </lineage>
</organism>
<sequence length="216" mass="24124">MSTSYYPHPIIAREGWPFIAGAFVVALVVQFFAGWVWALPLWLVALLVLQFFRDPPRVIPTLAGAVLAPADGRIVAVDKVQDPYLSREALKISVFMNVFNVHSNRSPVDGEIRDQWYFPGSFLNASLPKASLENERNALWIRTKEGRDVTCVQIAGLIAKRIVCHVHPGEHLARGQRFGFIRFGSRVDVYLPPGMKVNVGIGDKVQATQTVLAEFR</sequence>
<dbReference type="EC" id="4.1.1.65" evidence="1"/>
<dbReference type="EMBL" id="CP000450">
    <property type="protein sequence ID" value="ABI59511.1"/>
    <property type="molecule type" value="Genomic_DNA"/>
</dbReference>
<dbReference type="RefSeq" id="WP_011634330.1">
    <property type="nucleotide sequence ID" value="NC_008344.1"/>
</dbReference>
<dbReference type="STRING" id="335283.Neut_1259"/>
<dbReference type="KEGG" id="net:Neut_1259"/>
<dbReference type="eggNOG" id="COG0688">
    <property type="taxonomic scope" value="Bacteria"/>
</dbReference>
<dbReference type="HOGENOM" id="CLU_072492_0_0_4"/>
<dbReference type="OrthoDB" id="9790893at2"/>
<dbReference type="UniPathway" id="UPA00558">
    <property type="reaction ID" value="UER00616"/>
</dbReference>
<dbReference type="Proteomes" id="UP000001966">
    <property type="component" value="Chromosome"/>
</dbReference>
<dbReference type="GO" id="GO:0005886">
    <property type="term" value="C:plasma membrane"/>
    <property type="evidence" value="ECO:0007669"/>
    <property type="project" value="UniProtKB-SubCell"/>
</dbReference>
<dbReference type="GO" id="GO:0004609">
    <property type="term" value="F:phosphatidylserine decarboxylase activity"/>
    <property type="evidence" value="ECO:0007669"/>
    <property type="project" value="UniProtKB-UniRule"/>
</dbReference>
<dbReference type="GO" id="GO:0006646">
    <property type="term" value="P:phosphatidylethanolamine biosynthetic process"/>
    <property type="evidence" value="ECO:0007669"/>
    <property type="project" value="UniProtKB-UniRule"/>
</dbReference>
<dbReference type="HAMAP" id="MF_00664">
    <property type="entry name" value="PS_decarb_PSD_A"/>
    <property type="match status" value="1"/>
</dbReference>
<dbReference type="InterPro" id="IPR003817">
    <property type="entry name" value="PS_Dcarbxylase"/>
</dbReference>
<dbReference type="InterPro" id="IPR033175">
    <property type="entry name" value="PSD-A"/>
</dbReference>
<dbReference type="NCBIfam" id="NF003678">
    <property type="entry name" value="PRK05305.1-2"/>
    <property type="match status" value="1"/>
</dbReference>
<dbReference type="NCBIfam" id="NF003680">
    <property type="entry name" value="PRK05305.1-5"/>
    <property type="match status" value="1"/>
</dbReference>
<dbReference type="PANTHER" id="PTHR35809">
    <property type="entry name" value="ARCHAETIDYLSERINE DECARBOXYLASE PROENZYME-RELATED"/>
    <property type="match status" value="1"/>
</dbReference>
<dbReference type="PANTHER" id="PTHR35809:SF1">
    <property type="entry name" value="ARCHAETIDYLSERINE DECARBOXYLASE PROENZYME-RELATED"/>
    <property type="match status" value="1"/>
</dbReference>
<dbReference type="Pfam" id="PF02666">
    <property type="entry name" value="PS_Dcarbxylase"/>
    <property type="match status" value="1"/>
</dbReference>
<name>PSD_NITEC</name>
<evidence type="ECO:0000255" key="1">
    <source>
        <dbReference type="HAMAP-Rule" id="MF_00664"/>
    </source>
</evidence>